<keyword id="KW-0002">3D-structure</keyword>
<keyword id="KW-1048">Host nucleus</keyword>
<keyword id="KW-0945">Host-virus interaction</keyword>
<keyword id="KW-1090">Inhibition of host innate immune response by virus</keyword>
<keyword id="KW-0922">Interferon antiviral system evasion</keyword>
<keyword id="KW-0597">Phosphoprotein</keyword>
<keyword id="KW-0691">RNA editing</keyword>
<keyword id="KW-0899">Viral immunoevasion</keyword>
<dbReference type="EMBL" id="AF212302">
    <property type="status" value="NOT_ANNOTATED_CDS"/>
    <property type="molecule type" value="Genomic_RNA"/>
</dbReference>
<dbReference type="EMBL" id="AY029768">
    <property type="status" value="NOT_ANNOTATED_CDS"/>
    <property type="molecule type" value="Genomic_RNA"/>
</dbReference>
<dbReference type="EMBL" id="AY029767">
    <property type="status" value="NOT_ANNOTATED_CDS"/>
    <property type="molecule type" value="Genomic_RNA"/>
</dbReference>
<dbReference type="EMBL" id="AF376747">
    <property type="status" value="NOT_ANNOTATED_CDS"/>
    <property type="molecule type" value="Genomic_RNA"/>
</dbReference>
<dbReference type="EMBL" id="AJ564621">
    <property type="status" value="NOT_ANNOTATED_CDS"/>
    <property type="molecule type" value="Genomic_RNA"/>
</dbReference>
<dbReference type="EMBL" id="AJ564622">
    <property type="status" value="NOT_ANNOTATED_CDS"/>
    <property type="molecule type" value="Genomic_RNA"/>
</dbReference>
<dbReference type="EMBL" id="AJ564623">
    <property type="status" value="NOT_ANNOTATED_CDS"/>
    <property type="molecule type" value="Genomic_RNA"/>
</dbReference>
<dbReference type="EMBL" id="AJ627196">
    <property type="status" value="NOT_ANNOTATED_CDS"/>
    <property type="molecule type" value="Genomic_RNA"/>
</dbReference>
<dbReference type="PDB" id="6BVV">
    <property type="method" value="X-ray"/>
    <property type="resolution" value="2.30 A"/>
    <property type="chains" value="B=411-450"/>
</dbReference>
<dbReference type="PDB" id="6BW0">
    <property type="method" value="X-ray"/>
    <property type="resolution" value="2.10 A"/>
    <property type="chains" value="C=411-450"/>
</dbReference>
<dbReference type="PDB" id="6W0L">
    <property type="method" value="X-ray"/>
    <property type="resolution" value="2.30 A"/>
    <property type="chains" value="P=441-450"/>
</dbReference>
<dbReference type="PDBsum" id="6BVV"/>
<dbReference type="PDBsum" id="6BW0"/>
<dbReference type="PDBsum" id="6W0L"/>
<dbReference type="SASBDB" id="P0C1C7"/>
<dbReference type="SMR" id="P0C1C7"/>
<dbReference type="IntAct" id="P0C1C7">
    <property type="interactions" value="38"/>
</dbReference>
<dbReference type="MINT" id="P0C1C7"/>
<dbReference type="Proteomes" id="UP000002330">
    <property type="component" value="Segment"/>
</dbReference>
<dbReference type="Proteomes" id="UP000007527">
    <property type="component" value="Segment"/>
</dbReference>
<dbReference type="Proteomes" id="UP000008676">
    <property type="component" value="Segment"/>
</dbReference>
<dbReference type="Proteomes" id="UP000100567">
    <property type="component" value="Segment"/>
</dbReference>
<dbReference type="Proteomes" id="UP000110983">
    <property type="component" value="Segment"/>
</dbReference>
<dbReference type="Proteomes" id="UP000130871">
    <property type="component" value="Segment"/>
</dbReference>
<dbReference type="Proteomes" id="UP000170143">
    <property type="component" value="Segment"/>
</dbReference>
<dbReference type="GO" id="GO:0042025">
    <property type="term" value="C:host cell nucleus"/>
    <property type="evidence" value="ECO:0007669"/>
    <property type="project" value="UniProtKB-SubCell"/>
</dbReference>
<dbReference type="GO" id="GO:1990000">
    <property type="term" value="P:amyloid fibril formation"/>
    <property type="evidence" value="ECO:0000314"/>
    <property type="project" value="DisProt"/>
</dbReference>
<dbReference type="GO" id="GO:0052170">
    <property type="term" value="P:symbiont-mediated suppression of host innate immune response"/>
    <property type="evidence" value="ECO:0007669"/>
    <property type="project" value="UniProtKB-KW"/>
</dbReference>
<dbReference type="Gene3D" id="6.10.250.2490">
    <property type="match status" value="1"/>
</dbReference>
<dbReference type="InterPro" id="IPR035430">
    <property type="entry name" value="Paramyxo_PNT"/>
</dbReference>
<dbReference type="InterPro" id="IPR025909">
    <property type="entry name" value="Soyouz_module"/>
</dbReference>
<dbReference type="Pfam" id="PF14320">
    <property type="entry name" value="Paramyxo_PNT"/>
    <property type="match status" value="1"/>
</dbReference>
<dbReference type="Pfam" id="PF14313">
    <property type="entry name" value="Soyouz_module"/>
    <property type="match status" value="1"/>
</dbReference>
<sequence length="450" mass="49522">MDKLELVNDGLNIIDFIQKNQKEIQKTYGRSSIQQPSIKDQTKAWEDFLQCTSGESEQVEGGMSKDDGDVERRNLEDLSSTSPTDGTIGKRVSNTRDWAEGSDDIQLDPVVTDVVYHDHGGECTGYGFTSSPERGWSDYTSGANNGNVCLVSDAKMLSYAPEIAVSKEDRETDLVHLENKLSTTGLNPTAVPFTLRNLSDPAKDSPVIAEHYYGLGVKEQNVGPQTSRNVNLDSIKLYTSDDEEADQLEFEDEFAGSSSEVIVGISPEDEEPSSVGGKPNESIGRTIEGQSIRDNLQAKDNKSTDVPGAGPKDSAVKEEPPQKRLPMLAEEFECSGSEDPIIRELLKENSLINCQQGKDAQPPYHWSIERSISPDKTEIVNGAVQTADRQRPGTPMPKSRGIPIKKGAQTRNIHLLGRKTCLGRRVVQPGMFEDHPPTKKARVSMRRMSN</sequence>
<organismHost>
    <name type="scientific">Cynopterus brachyotis</name>
    <name type="common">Lesser short-nosed fruit bat</name>
    <name type="synonym">Pachysoma brachyotis</name>
    <dbReference type="NCBI Taxonomy" id="58060"/>
</organismHost>
<organismHost>
    <name type="scientific">Eonycteris spelaea</name>
    <name type="common">Lesser dawn bat</name>
    <name type="synonym">Macroglossus spelaeus</name>
    <dbReference type="NCBI Taxonomy" id="58065"/>
</organismHost>
<organismHost>
    <name type="scientific">Homo sapiens</name>
    <name type="common">Human</name>
    <dbReference type="NCBI Taxonomy" id="9606"/>
</organismHost>
<organismHost>
    <name type="scientific">Pteropus hypomelanus</name>
    <name type="common">Island flying fox</name>
    <name type="synonym">Variable flying fox</name>
    <dbReference type="NCBI Taxonomy" id="9405"/>
</organismHost>
<organismHost>
    <name type="scientific">Pteropus vampyrus</name>
    <name type="common">Large flying fox</name>
    <dbReference type="NCBI Taxonomy" id="132908"/>
</organismHost>
<organismHost>
    <name type="scientific">Scotophilus kuhlii</name>
    <name type="common">Lesser asiatic yellow bat</name>
    <dbReference type="NCBI Taxonomy" id="153297"/>
</organismHost>
<organismHost>
    <name type="scientific">Sus scrofa</name>
    <name type="common">Pig</name>
    <dbReference type="NCBI Taxonomy" id="9823"/>
</organismHost>
<comment type="function">
    <text>Prevent the establishment of cellular antiviral state by blocking the interferon-alpha/beta (IFN-alpha/beta). Interacts with host STAT1 protein in the nucleus, blocking it's phosphorylation by IFN-alpha/beta. Also blocks antiviral state induced by Toll-like receptor 3/TLR3 binding to dsRNA.</text>
</comment>
<comment type="subunit">
    <text evidence="3">Interacts with host STAT1.</text>
</comment>
<comment type="interaction">
    <interactant intactId="EBI-6151115">
        <id>P0C1C7</id>
    </interactant>
    <interactant intactId="EBI-646245">
        <id>Q60680</id>
        <label>Chuk</label>
    </interactant>
    <organismsDiffer>true</organismsDiffer>
    <experiments>2</experiments>
</comment>
<comment type="subcellular location">
    <subcellularLocation>
        <location evidence="4">Host nucleus</location>
    </subcellularLocation>
</comment>
<comment type="RNA editing">
    <location>
        <position position="406" evidence="1"/>
    </location>
    <text evidence="1">Partially edited. RNA editing at this position consists of an insertion of one or two guanine nucleotides. The sequence displayed here is the W protein, derived from the +2G edited RNA. The unedited RNA gives rise to the P protein (AC Q9IK91), the +1G edited RNA gives rise to the V protein (AC Q997F2) (By similarity).</text>
</comment>
<comment type="miscellaneous">
    <text>The P/V/C gene has two overlapping open reading frames. One encodes the P/V/W proteins and the other the C protein.</text>
</comment>
<feature type="chain" id="PRO_0000236017" description="Protein W">
    <location>
        <begin position="1"/>
        <end position="450"/>
    </location>
</feature>
<feature type="region of interest" description="Disordered" evidence="2">
    <location>
        <begin position="53"/>
        <end position="92"/>
    </location>
</feature>
<feature type="region of interest" description="Disordered" evidence="2">
    <location>
        <begin position="265"/>
        <end position="324"/>
    </location>
</feature>
<feature type="region of interest" description="Disordered" evidence="2">
    <location>
        <begin position="384"/>
        <end position="403"/>
    </location>
</feature>
<feature type="region of interest" description="Disordered" evidence="2">
    <location>
        <begin position="429"/>
        <end position="450"/>
    </location>
</feature>
<feature type="short sequence motif" description="Nuclear localization signal">
    <location>
        <begin position="439"/>
        <end position="442"/>
    </location>
</feature>
<feature type="compositionally biased region" description="Basic and acidic residues" evidence="2">
    <location>
        <begin position="63"/>
        <end position="76"/>
    </location>
</feature>
<feature type="compositionally biased region" description="Basic residues" evidence="2">
    <location>
        <begin position="438"/>
        <end position="450"/>
    </location>
</feature>
<feature type="modified residue" description="Phosphoserine; by host" evidence="1">
    <location>
        <position position="257"/>
    </location>
</feature>
<feature type="modified residue" description="Phosphoserine; by host" evidence="1">
    <location>
        <position position="350"/>
    </location>
</feature>
<feature type="sequence variant" description="In strain: Isolate Malaysian flying-fox.">
    <original>P</original>
    <variation>L</variation>
    <location>
        <position position="206"/>
    </location>
</feature>
<feature type="sequence variant" description="In strain: Isolate NV/MY/99/VRI-0626.">
    <original>S</original>
    <variation>R</variation>
    <location>
        <position position="274"/>
    </location>
</feature>
<feature type="sequence variant" description="In strain: Isolate NV/MY/99/VRI-0626.">
    <original>T</original>
    <variation>A</variation>
    <location>
        <position position="304"/>
    </location>
</feature>
<feature type="sequence variant" description="In strain: Isolate NV/MY/99/VRI-0626.">
    <original>E</original>
    <variation>K</variation>
    <location>
        <position position="378"/>
    </location>
</feature>
<feature type="mutagenesis site" description="No effect on nuclear localization." evidence="4">
    <original>RK</original>
    <variation>AA</variation>
    <location>
        <begin position="418"/>
        <end position="419"/>
    </location>
</feature>
<feature type="mutagenesis site" description="No effect on nuclear localization." evidence="4">
    <original>RR</original>
    <variation>AA</variation>
    <location>
        <begin position="424"/>
        <end position="425"/>
    </location>
</feature>
<feature type="mutagenesis site" description="Complete loss of nuclear localization." evidence="4">
    <original>KKAR</original>
    <variation>AAAA</variation>
    <location>
        <begin position="439"/>
        <end position="442"/>
    </location>
</feature>
<feature type="mutagenesis site" description="No effect on nuclear localization." evidence="4">
    <original>RR</original>
    <variation>AA</variation>
    <location>
        <begin position="446"/>
        <end position="447"/>
    </location>
</feature>
<protein>
    <recommendedName>
        <fullName>Protein W</fullName>
    </recommendedName>
</protein>
<proteinExistence type="evidence at protein level"/>
<organism>
    <name type="scientific">Nipah virus</name>
    <dbReference type="NCBI Taxonomy" id="3052225"/>
    <lineage>
        <taxon>Viruses</taxon>
        <taxon>Riboviria</taxon>
        <taxon>Orthornavirae</taxon>
        <taxon>Negarnaviricota</taxon>
        <taxon>Haploviricotina</taxon>
        <taxon>Monjiviricetes</taxon>
        <taxon>Mononegavirales</taxon>
        <taxon>Paramyxoviridae</taxon>
        <taxon>Orthoparamyxovirinae</taxon>
        <taxon>Henipavirus</taxon>
    </lineage>
</organism>
<evidence type="ECO:0000250" key="1"/>
<evidence type="ECO:0000256" key="2">
    <source>
        <dbReference type="SAM" id="MobiDB-lite"/>
    </source>
</evidence>
<evidence type="ECO:0000269" key="3">
    <source>
    </source>
</evidence>
<evidence type="ECO:0000269" key="4">
    <source>
    </source>
</evidence>
<gene>
    <name type="primary">P/V/C</name>
</gene>
<reference key="1">
    <citation type="journal article" date="2000" name="Science">
        <title>Nipah virus: a recently emergent deadly paramyxovirus.</title>
        <authorList>
            <person name="Chua K.B."/>
            <person name="Bellini W.J."/>
            <person name="Rota P.A."/>
            <person name="Harcourt B.H."/>
            <person name="Tamin A."/>
            <person name="Lam S.K."/>
            <person name="Ksiazek T.G."/>
            <person name="Rollin P.E."/>
            <person name="Zaki S.R."/>
            <person name="Shieh W."/>
            <person name="Goldsmith C.S."/>
            <person name="Gubler D.J."/>
            <person name="Roehrig J.T."/>
            <person name="Eaton B."/>
            <person name="Gould A.R."/>
            <person name="Olson J."/>
            <person name="Field H."/>
            <person name="Daniels P."/>
            <person name="Ling A.E."/>
            <person name="Peters C.J."/>
            <person name="Anderson L.J."/>
            <person name="Mahy B.W."/>
        </authorList>
    </citation>
    <scope>NUCLEOTIDE SEQUENCE [GENOMIC RNA]</scope>
</reference>
<reference key="2">
    <citation type="journal article" date="2001" name="Virology">
        <title>Molecular characterization of the polymerase gene and genomic termini of Nipah virus.</title>
        <authorList>
            <person name="Harcourt B.H."/>
            <person name="Tamin A."/>
            <person name="Halpin K."/>
            <person name="Ksiazek T.G."/>
            <person name="Rollin P.E."/>
            <person name="Bellini W.J."/>
            <person name="Rota P.A."/>
        </authorList>
    </citation>
    <scope>NUCLEOTIDE SEQUENCE [GENOMIC RNA]</scope>
</reference>
<reference key="3">
    <citation type="journal article" date="2001" name="J. Gen. Virol.">
        <title>Complete nucleotide sequences of Nipah virus isolates from Malaysia.</title>
        <authorList>
            <person name="Chan Y.P."/>
            <person name="Chua K.B."/>
            <person name="Koh C.L."/>
            <person name="Lim M.E."/>
            <person name="Lam S.K."/>
        </authorList>
    </citation>
    <scope>NUCLEOTIDE SEQUENCE [GENOMIC RNA]</scope>
    <source>
        <strain>Isolate UMMC1</strain>
        <strain>Isolate UMMC2</strain>
    </source>
</reference>
<reference key="4">
    <citation type="journal article" date="2002" name="Microbes Infect.">
        <title>Isolation of Nipah virus from Malaysian island flying-foxes.</title>
        <authorList>
            <person name="Chua K.B."/>
            <person name="Koh C.L."/>
            <person name="Hooi P.S."/>
            <person name="Wee K.F."/>
            <person name="Khong J.H."/>
            <person name="Chua B.H."/>
            <person name="Chan Y.P."/>
            <person name="Lim M.E."/>
            <person name="Lam S.K."/>
        </authorList>
    </citation>
    <scope>NUCLEOTIDE SEQUENCE [GENOMIC RNA]</scope>
    <source>
        <strain>Isolate Malaysian flying-fox</strain>
    </source>
</reference>
<reference key="5">
    <citation type="journal article" date="2004" name="Emerg. Infect. Dis.">
        <title>Isolation and molecular identification of Nipah virus from pigs.</title>
        <authorList>
            <person name="Abubakar S."/>
            <person name="Chang L.Y."/>
            <person name="Mohdali A.R."/>
            <person name="Sharifah S.H."/>
            <person name="Yusoff K."/>
            <person name="Zamrod Z."/>
        </authorList>
    </citation>
    <scope>NUCLEOTIDE SEQUENCE [GENOMIC RNA]</scope>
    <source>
        <strain>Isolate NV/MY/99/UM-0128</strain>
        <strain>Isolate NV/MY/99/VRI-1413</strain>
        <strain>Isolate NV/MY/99/VRI-2794</strain>
    </source>
</reference>
<reference key="6">
    <citation type="submission" date="2005-01" db="EMBL/GenBank/DDBJ databases">
        <title>Identification of a new Nipah virus strain from pigs.</title>
        <authorList>
            <person name="Abubakar S."/>
            <person name="Li-Yen C."/>
            <person name="Mohd Ali A.R."/>
            <person name="Sharifah S.H."/>
        </authorList>
    </citation>
    <scope>NUCLEOTIDE SEQUENCE [GENOMIC RNA]</scope>
    <source>
        <strain>Isolate NiV/MY/99/VRI-0626</strain>
    </source>
</reference>
<reference key="7">
    <citation type="journal article" date="2004" name="J. Virol.">
        <title>Nipah virus V and W proteins have a common STAT1-binding domain yet inhibit STAT1 activation from the cytoplasmic and nuclear compartments, respectively.</title>
        <authorList>
            <person name="Shaw M.L."/>
            <person name="Garcia-Sastre A."/>
            <person name="Palese P."/>
            <person name="Basler C.F."/>
        </authorList>
    </citation>
    <scope>INTERACTION WITH HOST STAT1</scope>
</reference>
<reference key="8">
    <citation type="journal article" date="2005" name="J. Virol.">
        <title>Nuclear localization of the Nipah virus W protein allows for inhibition of both virus- and toll-like receptor 3-triggered signaling pathways.</title>
        <authorList>
            <person name="Shaw M.L."/>
            <person name="Cardenas W.B."/>
            <person name="Zamarin D."/>
            <person name="Palese P."/>
            <person name="Basler C.F."/>
        </authorList>
    </citation>
    <scope>SUBCELLULAR LOCATION</scope>
    <scope>MUTAGENESIS OF 418-ARG-LYS-419; 424-ARG-ARG-425; 439-LYS--ARG-442 AND 446-ARG-ARG-447</scope>
</reference>
<name>W_NIPAV</name>
<accession>P0C1C7</accession>